<accession>Q9Y2C5</accession>
<accession>B4DDV9</accession>
<accession>E7EPE8</accession>
<accession>E7EU17</accession>
<accession>Q32MB7</accession>
<accession>Q32MB8</accession>
<feature type="chain" id="PRO_0000318166" description="Probable small intestine urate exporter">
    <location>
        <begin position="1"/>
        <end position="497"/>
    </location>
</feature>
<feature type="transmembrane region" description="Helical" evidence="1">
    <location>
        <begin position="149"/>
        <end position="169"/>
    </location>
</feature>
<feature type="transmembrane region" description="Helical" evidence="1">
    <location>
        <begin position="171"/>
        <end position="191"/>
    </location>
</feature>
<feature type="transmembrane region" description="Helical" evidence="1">
    <location>
        <begin position="203"/>
        <end position="223"/>
    </location>
</feature>
<feature type="transmembrane region" description="Helical" evidence="1">
    <location>
        <begin position="230"/>
        <end position="250"/>
    </location>
</feature>
<feature type="transmembrane region" description="Helical" evidence="1">
    <location>
        <begin position="292"/>
        <end position="312"/>
    </location>
</feature>
<feature type="transmembrane region" description="Helical" evidence="1">
    <location>
        <begin position="332"/>
        <end position="352"/>
    </location>
</feature>
<feature type="transmembrane region" description="Helical" evidence="1">
    <location>
        <begin position="368"/>
        <end position="388"/>
    </location>
</feature>
<feature type="transmembrane region" description="Helical" evidence="1">
    <location>
        <begin position="398"/>
        <end position="418"/>
    </location>
</feature>
<feature type="transmembrane region" description="Helical" evidence="1">
    <location>
        <begin position="431"/>
        <end position="451"/>
    </location>
</feature>
<feature type="transmembrane region" description="Helical" evidence="1">
    <location>
        <begin position="461"/>
        <end position="481"/>
    </location>
</feature>
<feature type="glycosylation site" description="N-linked (GlcNAc...) asparagine" evidence="1">
    <location>
        <position position="47"/>
    </location>
</feature>
<feature type="glycosylation site" description="N-linked (GlcNAc...) asparagine" evidence="1">
    <location>
        <position position="56"/>
    </location>
</feature>
<feature type="glycosylation site" description="N-linked (GlcNAc...) asparagine" evidence="1 6">
    <location>
        <position position="66"/>
    </location>
</feature>
<feature type="glycosylation site" description="N-linked (GlcNAc...) asparagine" evidence="1 6">
    <location>
        <position position="75"/>
    </location>
</feature>
<feature type="glycosylation site" description="N-linked (GlcNAc...) asparagine" evidence="1 6">
    <location>
        <position position="90"/>
    </location>
</feature>
<feature type="splice variant" id="VSP_031178" description="In isoform 2 and isoform 4." evidence="8">
    <location>
        <begin position="1"/>
        <end position="54"/>
    </location>
</feature>
<feature type="splice variant" id="VSP_054938" description="In isoform 3." evidence="7">
    <location>
        <begin position="100"/>
        <end position="329"/>
    </location>
</feature>
<feature type="splice variant" id="VSP_054939" description="In isoform 4." evidence="8">
    <location>
        <begin position="100"/>
        <end position="275"/>
    </location>
</feature>
<feature type="splice variant" id="VSP_054940" description="In isoform 4." evidence="8">
    <original>I</original>
    <variation>IGKGETGHRGERGKLRAAFSLLCVCPPTP</variation>
    <location>
        <position position="373"/>
    </location>
</feature>
<feature type="splice variant" id="VSP_054941" description="In isoform 4." evidence="8">
    <location>
        <begin position="424"/>
        <end position="497"/>
    </location>
</feature>
<feature type="sequence variant" id="VAR_038709" description="In dbSNP:rs11754288." evidence="3">
    <original>A</original>
    <variation>T</variation>
    <location>
        <position position="372"/>
    </location>
</feature>
<feature type="mutagenesis site" description="Loss of glycosylation and significant reduction in the transport of thyroid hormones T3 and T4; when associated with A-75 and A-90." evidence="6">
    <original>N</original>
    <variation>A</variation>
    <location>
        <position position="66"/>
    </location>
</feature>
<feature type="mutagenesis site" description="Loss of glycosylation and significant reduction in the transport of thyroid hormones T3 and T4; when associated with A-66 and A-90." evidence="6">
    <original>N</original>
    <variation>A</variation>
    <location>
        <position position="75"/>
    </location>
</feature>
<feature type="mutagenesis site" description="Loss of glycosylation and significant reduction in the transport of thyroid hormones T3 and T4; when associated with A-75 and A-90." evidence="6">
    <original>N</original>
    <variation>A</variation>
    <location>
        <position position="90"/>
    </location>
</feature>
<feature type="sequence conflict" description="In Ref. 2; BAG56870." evidence="9" ref="2">
    <original>I</original>
    <variation>T</variation>
    <location>
        <position position="14"/>
    </location>
</feature>
<sequence length="497" mass="54055">MSTGPDVKATVGDISSDGNLNVAQEECSRKGFCSVRHGLALILQLCNFSIYTQQMNLSIAIPAMVNNTAPPSQPNASTERPSTDSQGYWNETLKEFKAMAPAYDWSPEIQGIILSSLNYGSFLAPIPSGYVAGIFGAKYVVGAGLFISSFLTLFIPLAANAGVALLIVLRIVQGIAQVMVLTGQYSIWVKWAPPLERSQLTTIAGSGSMLGSFIVLLAGGLLCQTIGWPYVFYIFGGIGCACCPLWFPLIYDDPVNHPFISAGEKRYIVCSLAQQDCSPGWSLPIRAMIKSLPLWAILVSYFCEYWLFYTIMAYTPTYISSVLQANLRDSGILSALPFVVGCICIILGGLLADFLLSRKILRLITIRKLFTAIGVLFPSVILVSLPWVRSSHSMTMTFLVLSSAISSFCESGALVNFLDIAPRYTGFLKGLLQVFAHIAGAISPTAAGFFISQDSEFGWRNVFLLSAAVNISGLVFYLIFGRADVQDWAKEQTFTHL</sequence>
<protein>
    <recommendedName>
        <fullName>Probable small intestine urate exporter</fullName>
    </recommendedName>
    <alternativeName>
        <fullName>Solute carrier family 17 member 4</fullName>
    </alternativeName>
</protein>
<comment type="function">
    <text evidence="4 5 6">Acts as a membrane potential-dependent organic anion transporter, the transport requires a low concentration of chloride ions (PubMed:22460716). Mediates chloride-dependent transport of urate (PubMed:22460716). Mediates sodium-independent high affinity transport of thyroid hormones including L-thyroxine (T4) and 3,3',5-triiodo-L-thyronine (T3) (PubMed:30367059, PubMed:34937426). Can actively transport inorganic phosphate into cells via Na(+) cotransport (PubMed:22460716).</text>
</comment>
<comment type="catalytic activity">
    <reaction evidence="4">
        <text>3 Na(+)(out) + phosphate(out) = 3 Na(+)(in) + phosphate(in)</text>
        <dbReference type="Rhea" id="RHEA:71255"/>
        <dbReference type="ChEBI" id="CHEBI:29101"/>
        <dbReference type="ChEBI" id="CHEBI:43474"/>
    </reaction>
</comment>
<comment type="catalytic activity">
    <reaction evidence="4">
        <text>urate(out) + n chloride(in) = urate(in) + n chloride(out)</text>
        <dbReference type="Rhea" id="RHEA:72319"/>
        <dbReference type="ChEBI" id="CHEBI:17775"/>
        <dbReference type="ChEBI" id="CHEBI:17996"/>
    </reaction>
</comment>
<comment type="catalytic activity">
    <reaction evidence="5 6">
        <text>L-thyroxine(out) = L-thyroxine(in)</text>
        <dbReference type="Rhea" id="RHEA:71819"/>
        <dbReference type="ChEBI" id="CHEBI:58448"/>
    </reaction>
</comment>
<comment type="catalytic activity">
    <reaction evidence="5 6">
        <text>3,3',5-triiodo-L-thyronine(out) = 3,3',5-triiodo-L-thyronine(in)</text>
        <dbReference type="Rhea" id="RHEA:71811"/>
        <dbReference type="ChEBI" id="CHEBI:533015"/>
    </reaction>
</comment>
<comment type="biophysicochemical properties">
    <kinetics>
        <KM evidence="4">0.3 mM for urate</KM>
        <Vmax evidence="4">19.1 nmol/min/mg protein for urate</Vmax>
    </kinetics>
</comment>
<comment type="subcellular location">
    <subcellularLocation>
        <location evidence="4">Apical cell membrane</location>
        <topology evidence="1">Multi-pass membrane protein</topology>
    </subcellularLocation>
    <text evidence="4">Apical in the intestinal brush border.</text>
</comment>
<comment type="alternative products">
    <event type="alternative splicing"/>
    <isoform>
        <id>Q9Y2C5-1</id>
        <name>1</name>
        <sequence type="displayed"/>
    </isoform>
    <isoform>
        <id>Q9Y2C5-2</id>
        <name>2</name>
        <sequence type="described" ref="VSP_031178"/>
    </isoform>
    <isoform>
        <id>Q9Y2C5-3</id>
        <name>3</name>
        <sequence type="described" ref="VSP_054938"/>
    </isoform>
    <isoform>
        <id>Q9Y2C5-4</id>
        <name>4</name>
        <sequence type="described" ref="VSP_031178 VSP_054939 VSP_054940 VSP_054941"/>
    </isoform>
</comment>
<comment type="tissue specificity">
    <text evidence="2 4">Abundantly expressed in pancreas, liver, colon and small intestine, less in kidney. Not detected in the adrenal glands, brain, placenta, heart, testis, skeletal muscle, and lungs.</text>
</comment>
<comment type="similarity">
    <text evidence="9">Belongs to the major facilitator superfamily. Sodium/anion cotransporter family.</text>
</comment>
<name>S17A4_HUMAN</name>
<proteinExistence type="evidence at protein level"/>
<keyword id="KW-0025">Alternative splicing</keyword>
<keyword id="KW-1003">Cell membrane</keyword>
<keyword id="KW-0325">Glycoprotein</keyword>
<keyword id="KW-0406">Ion transport</keyword>
<keyword id="KW-0472">Membrane</keyword>
<keyword id="KW-1185">Reference proteome</keyword>
<keyword id="KW-0915">Sodium</keyword>
<keyword id="KW-0739">Sodium transport</keyword>
<keyword id="KW-0769">Symport</keyword>
<keyword id="KW-0812">Transmembrane</keyword>
<keyword id="KW-1133">Transmembrane helix</keyword>
<keyword id="KW-0813">Transport</keyword>
<organism>
    <name type="scientific">Homo sapiens</name>
    <name type="common">Human</name>
    <dbReference type="NCBI Taxonomy" id="9606"/>
    <lineage>
        <taxon>Eukaryota</taxon>
        <taxon>Metazoa</taxon>
        <taxon>Chordata</taxon>
        <taxon>Craniata</taxon>
        <taxon>Vertebrata</taxon>
        <taxon>Euteleostomi</taxon>
        <taxon>Mammalia</taxon>
        <taxon>Eutheria</taxon>
        <taxon>Euarchontoglires</taxon>
        <taxon>Primates</taxon>
        <taxon>Haplorrhini</taxon>
        <taxon>Catarrhini</taxon>
        <taxon>Hominidae</taxon>
        <taxon>Homo</taxon>
    </lineage>
</organism>
<evidence type="ECO:0000255" key="1"/>
<evidence type="ECO:0000269" key="2">
    <source>
    </source>
</evidence>
<evidence type="ECO:0000269" key="3">
    <source>
    </source>
</evidence>
<evidence type="ECO:0000269" key="4">
    <source>
    </source>
</evidence>
<evidence type="ECO:0000269" key="5">
    <source>
    </source>
</evidence>
<evidence type="ECO:0000269" key="6">
    <source>
    </source>
</evidence>
<evidence type="ECO:0000303" key="7">
    <source>
    </source>
</evidence>
<evidence type="ECO:0000303" key="8">
    <source>
    </source>
</evidence>
<evidence type="ECO:0000305" key="9"/>
<gene>
    <name type="primary">SLC17A4</name>
</gene>
<dbReference type="EMBL" id="AB020527">
    <property type="protein sequence ID" value="BAA76663.1"/>
    <property type="molecule type" value="mRNA"/>
</dbReference>
<dbReference type="EMBL" id="AK293354">
    <property type="protein sequence ID" value="BAG56870.1"/>
    <property type="molecule type" value="mRNA"/>
</dbReference>
<dbReference type="EMBL" id="AL391194">
    <property type="status" value="NOT_ANNOTATED_CDS"/>
    <property type="molecule type" value="Genomic_DNA"/>
</dbReference>
<dbReference type="EMBL" id="CH471087">
    <property type="protein sequence ID" value="EAW55492.1"/>
    <property type="molecule type" value="Genomic_DNA"/>
</dbReference>
<dbReference type="EMBL" id="BC109207">
    <property type="protein sequence ID" value="AAI09208.1"/>
    <property type="molecule type" value="mRNA"/>
</dbReference>
<dbReference type="EMBL" id="BC109208">
    <property type="protein sequence ID" value="AAI09209.1"/>
    <property type="molecule type" value="mRNA"/>
</dbReference>
<dbReference type="CCDS" id="CCDS4564.1">
    <molecule id="Q9Y2C5-1"/>
</dbReference>
<dbReference type="CCDS" id="CCDS75411.1">
    <molecule id="Q9Y2C5-2"/>
</dbReference>
<dbReference type="RefSeq" id="NP_001273050.1">
    <molecule id="Q9Y2C5-2"/>
    <property type="nucleotide sequence ID" value="NM_001286121.1"/>
</dbReference>
<dbReference type="RefSeq" id="NP_005486.1">
    <molecule id="Q9Y2C5-1"/>
    <property type="nucleotide sequence ID" value="NM_005495.3"/>
</dbReference>
<dbReference type="RefSeq" id="XP_011512513.1">
    <molecule id="Q9Y2C5-2"/>
    <property type="nucleotide sequence ID" value="XM_011514211.2"/>
</dbReference>
<dbReference type="RefSeq" id="XP_011512521.1">
    <molecule id="Q9Y2C5-3"/>
    <property type="nucleotide sequence ID" value="XM_011514219.3"/>
</dbReference>
<dbReference type="RefSeq" id="XP_024302062.1">
    <molecule id="Q9Y2C5-1"/>
    <property type="nucleotide sequence ID" value="XM_024446294.2"/>
</dbReference>
<dbReference type="RefSeq" id="XP_024302063.1">
    <molecule id="Q9Y2C5-1"/>
    <property type="nucleotide sequence ID" value="XM_024446295.2"/>
</dbReference>
<dbReference type="RefSeq" id="XP_024302064.1">
    <molecule id="Q9Y2C5-1"/>
    <property type="nucleotide sequence ID" value="XM_024446296.2"/>
</dbReference>
<dbReference type="RefSeq" id="XP_047273989.1">
    <molecule id="Q9Y2C5-1"/>
    <property type="nucleotide sequence ID" value="XM_047418033.1"/>
</dbReference>
<dbReference type="RefSeq" id="XP_047273990.1">
    <molecule id="Q9Y2C5-1"/>
    <property type="nucleotide sequence ID" value="XM_047418034.1"/>
</dbReference>
<dbReference type="RefSeq" id="XP_047273996.1">
    <molecule id="Q9Y2C5-3"/>
    <property type="nucleotide sequence ID" value="XM_047418040.1"/>
</dbReference>
<dbReference type="RefSeq" id="XP_054209951.1">
    <molecule id="Q9Y2C5-1"/>
    <property type="nucleotide sequence ID" value="XM_054353976.1"/>
</dbReference>
<dbReference type="RefSeq" id="XP_054209952.1">
    <molecule id="Q9Y2C5-1"/>
    <property type="nucleotide sequence ID" value="XM_054353977.1"/>
</dbReference>
<dbReference type="RefSeq" id="XP_054209953.1">
    <molecule id="Q9Y2C5-1"/>
    <property type="nucleotide sequence ID" value="XM_054353978.1"/>
</dbReference>
<dbReference type="RefSeq" id="XP_054209954.1">
    <molecule id="Q9Y2C5-1"/>
    <property type="nucleotide sequence ID" value="XM_054353979.1"/>
</dbReference>
<dbReference type="RefSeq" id="XP_054209955.1">
    <molecule id="Q9Y2C5-2"/>
    <property type="nucleotide sequence ID" value="XM_054353980.1"/>
</dbReference>
<dbReference type="RefSeq" id="XP_054209963.1">
    <molecule id="Q9Y2C5-3"/>
    <property type="nucleotide sequence ID" value="XM_054353988.1"/>
</dbReference>
<dbReference type="SMR" id="Q9Y2C5"/>
<dbReference type="BioGRID" id="115361">
    <property type="interactions" value="1"/>
</dbReference>
<dbReference type="FunCoup" id="Q9Y2C5">
    <property type="interactions" value="31"/>
</dbReference>
<dbReference type="STRING" id="9606.ENSP00000367137"/>
<dbReference type="TCDB" id="2.A.1.14.24">
    <property type="family name" value="the major facilitator superfamily (mfs)"/>
</dbReference>
<dbReference type="GlyCosmos" id="Q9Y2C5">
    <property type="glycosylation" value="5 sites, No reported glycans"/>
</dbReference>
<dbReference type="GlyGen" id="Q9Y2C5">
    <property type="glycosylation" value="7 sites"/>
</dbReference>
<dbReference type="iPTMnet" id="Q9Y2C5"/>
<dbReference type="PhosphoSitePlus" id="Q9Y2C5"/>
<dbReference type="BioMuta" id="SLC17A4"/>
<dbReference type="DMDM" id="74753468"/>
<dbReference type="MassIVE" id="Q9Y2C5"/>
<dbReference type="PaxDb" id="9606-ENSP00000367137"/>
<dbReference type="PeptideAtlas" id="Q9Y2C5"/>
<dbReference type="ProteomicsDB" id="85729">
    <molecule id="Q9Y2C5-1"/>
</dbReference>
<dbReference type="ProteomicsDB" id="85730">
    <molecule id="Q9Y2C5-2"/>
</dbReference>
<dbReference type="Antibodypedia" id="10729">
    <property type="antibodies" value="65 antibodies from 19 providers"/>
</dbReference>
<dbReference type="DNASU" id="10050"/>
<dbReference type="Ensembl" id="ENST00000377905.9">
    <molecule id="Q9Y2C5-1"/>
    <property type="protein sequence ID" value="ENSP00000367137.4"/>
    <property type="gene ID" value="ENSG00000146039.11"/>
</dbReference>
<dbReference type="Ensembl" id="ENST00000397076.2">
    <molecule id="Q9Y2C5-4"/>
    <property type="protein sequence ID" value="ENSP00000380266.2"/>
    <property type="gene ID" value="ENSG00000146039.11"/>
</dbReference>
<dbReference type="Ensembl" id="ENST00000439485.6">
    <molecule id="Q9Y2C5-2"/>
    <property type="protein sequence ID" value="ENSP00000391345.3"/>
    <property type="gene ID" value="ENSG00000146039.11"/>
</dbReference>
<dbReference type="GeneID" id="10050"/>
<dbReference type="KEGG" id="hsa:10050"/>
<dbReference type="MANE-Select" id="ENST00000377905.9">
    <property type="protein sequence ID" value="ENSP00000367137.4"/>
    <property type="RefSeq nucleotide sequence ID" value="NM_005495.3"/>
    <property type="RefSeq protein sequence ID" value="NP_005486.1"/>
</dbReference>
<dbReference type="UCSC" id="uc003nfe.4">
    <molecule id="Q9Y2C5-1"/>
    <property type="organism name" value="human"/>
</dbReference>
<dbReference type="AGR" id="HGNC:10932"/>
<dbReference type="CTD" id="10050"/>
<dbReference type="DisGeNET" id="10050"/>
<dbReference type="GeneCards" id="SLC17A4"/>
<dbReference type="HGNC" id="HGNC:10932">
    <property type="gene designation" value="SLC17A4"/>
</dbReference>
<dbReference type="HPA" id="ENSG00000146039">
    <property type="expression patterns" value="Group enriched (gallbladder, intestine, liver, pancreas)"/>
</dbReference>
<dbReference type="MIM" id="604216">
    <property type="type" value="gene"/>
</dbReference>
<dbReference type="neXtProt" id="NX_Q9Y2C5"/>
<dbReference type="OpenTargets" id="ENSG00000146039"/>
<dbReference type="PharmGKB" id="PA35823"/>
<dbReference type="VEuPathDB" id="HostDB:ENSG00000146039"/>
<dbReference type="eggNOG" id="KOG2532">
    <property type="taxonomic scope" value="Eukaryota"/>
</dbReference>
<dbReference type="GeneTree" id="ENSGT00940000160894"/>
<dbReference type="HOGENOM" id="CLU_001265_5_0_1"/>
<dbReference type="InParanoid" id="Q9Y2C5"/>
<dbReference type="OMA" id="IGWPYIF"/>
<dbReference type="OrthoDB" id="2985014at2759"/>
<dbReference type="PAN-GO" id="Q9Y2C5">
    <property type="GO annotations" value="4 GO annotations based on evolutionary models"/>
</dbReference>
<dbReference type="PhylomeDB" id="Q9Y2C5"/>
<dbReference type="TreeFam" id="TF313535"/>
<dbReference type="PathwayCommons" id="Q9Y2C5"/>
<dbReference type="BioGRID-ORCS" id="10050">
    <property type="hits" value="8 hits in 1141 CRISPR screens"/>
</dbReference>
<dbReference type="GenomeRNAi" id="10050"/>
<dbReference type="Pharos" id="Q9Y2C5">
    <property type="development level" value="Tbio"/>
</dbReference>
<dbReference type="PRO" id="PR:Q9Y2C5"/>
<dbReference type="Proteomes" id="UP000005640">
    <property type="component" value="Chromosome 6"/>
</dbReference>
<dbReference type="RNAct" id="Q9Y2C5">
    <property type="molecule type" value="protein"/>
</dbReference>
<dbReference type="Bgee" id="ENSG00000146039">
    <property type="expression patterns" value="Expressed in mucosa of transverse colon and 44 other cell types or tissues"/>
</dbReference>
<dbReference type="ExpressionAtlas" id="Q9Y2C5">
    <property type="expression patterns" value="baseline and differential"/>
</dbReference>
<dbReference type="GO" id="GO:0016324">
    <property type="term" value="C:apical plasma membrane"/>
    <property type="evidence" value="ECO:0000318"/>
    <property type="project" value="GO_Central"/>
</dbReference>
<dbReference type="GO" id="GO:0031526">
    <property type="term" value="C:brush border membrane"/>
    <property type="evidence" value="ECO:0000314"/>
    <property type="project" value="UniProtKB"/>
</dbReference>
<dbReference type="GO" id="GO:0016020">
    <property type="term" value="C:membrane"/>
    <property type="evidence" value="ECO:0000304"/>
    <property type="project" value="ProtInc"/>
</dbReference>
<dbReference type="GO" id="GO:0005886">
    <property type="term" value="C:plasma membrane"/>
    <property type="evidence" value="ECO:0000304"/>
    <property type="project" value="ProtInc"/>
</dbReference>
<dbReference type="GO" id="GO:0005436">
    <property type="term" value="F:sodium:phosphate symporter activity"/>
    <property type="evidence" value="ECO:0000304"/>
    <property type="project" value="ProtInc"/>
</dbReference>
<dbReference type="GO" id="GO:0015349">
    <property type="term" value="F:thyroid hormone transmembrane transporter activity"/>
    <property type="evidence" value="ECO:0000314"/>
    <property type="project" value="UniProtKB"/>
</dbReference>
<dbReference type="GO" id="GO:0022857">
    <property type="term" value="F:transmembrane transporter activity"/>
    <property type="evidence" value="ECO:0000318"/>
    <property type="project" value="GO_Central"/>
</dbReference>
<dbReference type="GO" id="GO:0015143">
    <property type="term" value="F:urate transmembrane transporter activity"/>
    <property type="evidence" value="ECO:0000314"/>
    <property type="project" value="UniProtKB"/>
</dbReference>
<dbReference type="GO" id="GO:0006796">
    <property type="term" value="P:phosphate-containing compound metabolic process"/>
    <property type="evidence" value="ECO:0000304"/>
    <property type="project" value="ProtInc"/>
</dbReference>
<dbReference type="GO" id="GO:0006814">
    <property type="term" value="P:sodium ion transport"/>
    <property type="evidence" value="ECO:0000304"/>
    <property type="project" value="ProtInc"/>
</dbReference>
<dbReference type="GO" id="GO:0044341">
    <property type="term" value="P:sodium-dependent phosphate transport"/>
    <property type="evidence" value="ECO:0000314"/>
    <property type="project" value="UniProtKB"/>
</dbReference>
<dbReference type="CDD" id="cd17318">
    <property type="entry name" value="MFS_SLC17"/>
    <property type="match status" value="1"/>
</dbReference>
<dbReference type="FunFam" id="1.20.1250.20:FF:000003">
    <property type="entry name" value="Solute carrier family 17 member 3"/>
    <property type="match status" value="1"/>
</dbReference>
<dbReference type="FunFam" id="1.20.1250.20:FF:000060">
    <property type="entry name" value="Solute carrier family 17 member 3"/>
    <property type="match status" value="1"/>
</dbReference>
<dbReference type="Gene3D" id="1.20.1250.20">
    <property type="entry name" value="MFS general substrate transporter like domains"/>
    <property type="match status" value="2"/>
</dbReference>
<dbReference type="InterPro" id="IPR011701">
    <property type="entry name" value="MFS"/>
</dbReference>
<dbReference type="InterPro" id="IPR020846">
    <property type="entry name" value="MFS_dom"/>
</dbReference>
<dbReference type="InterPro" id="IPR050382">
    <property type="entry name" value="MFS_Na/Anion_cotransporter"/>
</dbReference>
<dbReference type="InterPro" id="IPR036259">
    <property type="entry name" value="MFS_trans_sf"/>
</dbReference>
<dbReference type="PANTHER" id="PTHR11662:SF284">
    <property type="entry name" value="SMALL INTESTINE URATE EXPORTER-RELATED"/>
    <property type="match status" value="1"/>
</dbReference>
<dbReference type="PANTHER" id="PTHR11662">
    <property type="entry name" value="SOLUTE CARRIER FAMILY 17"/>
    <property type="match status" value="1"/>
</dbReference>
<dbReference type="Pfam" id="PF07690">
    <property type="entry name" value="MFS_1"/>
    <property type="match status" value="1"/>
</dbReference>
<dbReference type="SUPFAM" id="SSF103473">
    <property type="entry name" value="MFS general substrate transporter"/>
    <property type="match status" value="1"/>
</dbReference>
<dbReference type="PROSITE" id="PS50850">
    <property type="entry name" value="MFS"/>
    <property type="match status" value="1"/>
</dbReference>
<reference key="1">
    <citation type="journal article" date="1999" name="J. Hum. Genet.">
        <title>Isolation and chromosomal mapping of a novel human gene showing homology to Na+/PO4 cotransporter.</title>
        <authorList>
            <person name="Shibui A."/>
            <person name="Tsunoda T."/>
            <person name="Seki N."/>
            <person name="Suzuki Y."/>
            <person name="Sugane K."/>
            <person name="Sugano S."/>
        </authorList>
    </citation>
    <scope>NUCLEOTIDE SEQUENCE [MRNA] (ISOFORM 1)</scope>
    <scope>TISSUE SPECIFICITY</scope>
    <source>
        <tissue>Small intestine</tissue>
    </source>
</reference>
<reference key="2">
    <citation type="journal article" date="2004" name="Nat. Genet.">
        <title>Complete sequencing and characterization of 21,243 full-length human cDNAs.</title>
        <authorList>
            <person name="Ota T."/>
            <person name="Suzuki Y."/>
            <person name="Nishikawa T."/>
            <person name="Otsuki T."/>
            <person name="Sugiyama T."/>
            <person name="Irie R."/>
            <person name="Wakamatsu A."/>
            <person name="Hayashi K."/>
            <person name="Sato H."/>
            <person name="Nagai K."/>
            <person name="Kimura K."/>
            <person name="Makita H."/>
            <person name="Sekine M."/>
            <person name="Obayashi M."/>
            <person name="Nishi T."/>
            <person name="Shibahara T."/>
            <person name="Tanaka T."/>
            <person name="Ishii S."/>
            <person name="Yamamoto J."/>
            <person name="Saito K."/>
            <person name="Kawai Y."/>
            <person name="Isono Y."/>
            <person name="Nakamura Y."/>
            <person name="Nagahari K."/>
            <person name="Murakami K."/>
            <person name="Yasuda T."/>
            <person name="Iwayanagi T."/>
            <person name="Wagatsuma M."/>
            <person name="Shiratori A."/>
            <person name="Sudo H."/>
            <person name="Hosoiri T."/>
            <person name="Kaku Y."/>
            <person name="Kodaira H."/>
            <person name="Kondo H."/>
            <person name="Sugawara M."/>
            <person name="Takahashi M."/>
            <person name="Kanda K."/>
            <person name="Yokoi T."/>
            <person name="Furuya T."/>
            <person name="Kikkawa E."/>
            <person name="Omura Y."/>
            <person name="Abe K."/>
            <person name="Kamihara K."/>
            <person name="Katsuta N."/>
            <person name="Sato K."/>
            <person name="Tanikawa M."/>
            <person name="Yamazaki M."/>
            <person name="Ninomiya K."/>
            <person name="Ishibashi T."/>
            <person name="Yamashita H."/>
            <person name="Murakawa K."/>
            <person name="Fujimori K."/>
            <person name="Tanai H."/>
            <person name="Kimata M."/>
            <person name="Watanabe M."/>
            <person name="Hiraoka S."/>
            <person name="Chiba Y."/>
            <person name="Ishida S."/>
            <person name="Ono Y."/>
            <person name="Takiguchi S."/>
            <person name="Watanabe S."/>
            <person name="Yosida M."/>
            <person name="Hotuta T."/>
            <person name="Kusano J."/>
            <person name="Kanehori K."/>
            <person name="Takahashi-Fujii A."/>
            <person name="Hara H."/>
            <person name="Tanase T.-O."/>
            <person name="Nomura Y."/>
            <person name="Togiya S."/>
            <person name="Komai F."/>
            <person name="Hara R."/>
            <person name="Takeuchi K."/>
            <person name="Arita M."/>
            <person name="Imose N."/>
            <person name="Musashino K."/>
            <person name="Yuuki H."/>
            <person name="Oshima A."/>
            <person name="Sasaki N."/>
            <person name="Aotsuka S."/>
            <person name="Yoshikawa Y."/>
            <person name="Matsunawa H."/>
            <person name="Ichihara T."/>
            <person name="Shiohata N."/>
            <person name="Sano S."/>
            <person name="Moriya S."/>
            <person name="Momiyama H."/>
            <person name="Satoh N."/>
            <person name="Takami S."/>
            <person name="Terashima Y."/>
            <person name="Suzuki O."/>
            <person name="Nakagawa S."/>
            <person name="Senoh A."/>
            <person name="Mizoguchi H."/>
            <person name="Goto Y."/>
            <person name="Shimizu F."/>
            <person name="Wakebe H."/>
            <person name="Hishigaki H."/>
            <person name="Watanabe T."/>
            <person name="Sugiyama A."/>
            <person name="Takemoto M."/>
            <person name="Kawakami B."/>
            <person name="Yamazaki M."/>
            <person name="Watanabe K."/>
            <person name="Kumagai A."/>
            <person name="Itakura S."/>
            <person name="Fukuzumi Y."/>
            <person name="Fujimori Y."/>
            <person name="Komiyama M."/>
            <person name="Tashiro H."/>
            <person name="Tanigami A."/>
            <person name="Fujiwara T."/>
            <person name="Ono T."/>
            <person name="Yamada K."/>
            <person name="Fujii Y."/>
            <person name="Ozaki K."/>
            <person name="Hirao M."/>
            <person name="Ohmori Y."/>
            <person name="Kawabata A."/>
            <person name="Hikiji T."/>
            <person name="Kobatake N."/>
            <person name="Inagaki H."/>
            <person name="Ikema Y."/>
            <person name="Okamoto S."/>
            <person name="Okitani R."/>
            <person name="Kawakami T."/>
            <person name="Noguchi S."/>
            <person name="Itoh T."/>
            <person name="Shigeta K."/>
            <person name="Senba T."/>
            <person name="Matsumura K."/>
            <person name="Nakajima Y."/>
            <person name="Mizuno T."/>
            <person name="Morinaga M."/>
            <person name="Sasaki M."/>
            <person name="Togashi T."/>
            <person name="Oyama M."/>
            <person name="Hata H."/>
            <person name="Watanabe M."/>
            <person name="Komatsu T."/>
            <person name="Mizushima-Sugano J."/>
            <person name="Satoh T."/>
            <person name="Shirai Y."/>
            <person name="Takahashi Y."/>
            <person name="Nakagawa K."/>
            <person name="Okumura K."/>
            <person name="Nagase T."/>
            <person name="Nomura N."/>
            <person name="Kikuchi H."/>
            <person name="Masuho Y."/>
            <person name="Yamashita R."/>
            <person name="Nakai K."/>
            <person name="Yada T."/>
            <person name="Nakamura Y."/>
            <person name="Ohara O."/>
            <person name="Isogai T."/>
            <person name="Sugano S."/>
        </authorList>
    </citation>
    <scope>NUCLEOTIDE SEQUENCE [LARGE SCALE MRNA] (ISOFORM 3)</scope>
    <source>
        <tissue>Urinary bladder</tissue>
    </source>
</reference>
<reference key="3">
    <citation type="journal article" date="2003" name="Nature">
        <title>The DNA sequence and analysis of human chromosome 6.</title>
        <authorList>
            <person name="Mungall A.J."/>
            <person name="Palmer S.A."/>
            <person name="Sims S.K."/>
            <person name="Edwards C.A."/>
            <person name="Ashurst J.L."/>
            <person name="Wilming L."/>
            <person name="Jones M.C."/>
            <person name="Horton R."/>
            <person name="Hunt S.E."/>
            <person name="Scott C.E."/>
            <person name="Gilbert J.G.R."/>
            <person name="Clamp M.E."/>
            <person name="Bethel G."/>
            <person name="Milne S."/>
            <person name="Ainscough R."/>
            <person name="Almeida J.P."/>
            <person name="Ambrose K.D."/>
            <person name="Andrews T.D."/>
            <person name="Ashwell R.I.S."/>
            <person name="Babbage A.K."/>
            <person name="Bagguley C.L."/>
            <person name="Bailey J."/>
            <person name="Banerjee R."/>
            <person name="Barker D.J."/>
            <person name="Barlow K.F."/>
            <person name="Bates K."/>
            <person name="Beare D.M."/>
            <person name="Beasley H."/>
            <person name="Beasley O."/>
            <person name="Bird C.P."/>
            <person name="Blakey S.E."/>
            <person name="Bray-Allen S."/>
            <person name="Brook J."/>
            <person name="Brown A.J."/>
            <person name="Brown J.Y."/>
            <person name="Burford D.C."/>
            <person name="Burrill W."/>
            <person name="Burton J."/>
            <person name="Carder C."/>
            <person name="Carter N.P."/>
            <person name="Chapman J.C."/>
            <person name="Clark S.Y."/>
            <person name="Clark G."/>
            <person name="Clee C.M."/>
            <person name="Clegg S."/>
            <person name="Cobley V."/>
            <person name="Collier R.E."/>
            <person name="Collins J.E."/>
            <person name="Colman L.K."/>
            <person name="Corby N.R."/>
            <person name="Coville G.J."/>
            <person name="Culley K.M."/>
            <person name="Dhami P."/>
            <person name="Davies J."/>
            <person name="Dunn M."/>
            <person name="Earthrowl M.E."/>
            <person name="Ellington A.E."/>
            <person name="Evans K.A."/>
            <person name="Faulkner L."/>
            <person name="Francis M.D."/>
            <person name="Frankish A."/>
            <person name="Frankland J."/>
            <person name="French L."/>
            <person name="Garner P."/>
            <person name="Garnett J."/>
            <person name="Ghori M.J."/>
            <person name="Gilby L.M."/>
            <person name="Gillson C.J."/>
            <person name="Glithero R.J."/>
            <person name="Grafham D.V."/>
            <person name="Grant M."/>
            <person name="Gribble S."/>
            <person name="Griffiths C."/>
            <person name="Griffiths M.N.D."/>
            <person name="Hall R."/>
            <person name="Halls K.S."/>
            <person name="Hammond S."/>
            <person name="Harley J.L."/>
            <person name="Hart E.A."/>
            <person name="Heath P.D."/>
            <person name="Heathcott R."/>
            <person name="Holmes S.J."/>
            <person name="Howden P.J."/>
            <person name="Howe K.L."/>
            <person name="Howell G.R."/>
            <person name="Huckle E."/>
            <person name="Humphray S.J."/>
            <person name="Humphries M.D."/>
            <person name="Hunt A.R."/>
            <person name="Johnson C.M."/>
            <person name="Joy A.A."/>
            <person name="Kay M."/>
            <person name="Keenan S.J."/>
            <person name="Kimberley A.M."/>
            <person name="King A."/>
            <person name="Laird G.K."/>
            <person name="Langford C."/>
            <person name="Lawlor S."/>
            <person name="Leongamornlert D.A."/>
            <person name="Leversha M."/>
            <person name="Lloyd C.R."/>
            <person name="Lloyd D.M."/>
            <person name="Loveland J.E."/>
            <person name="Lovell J."/>
            <person name="Martin S."/>
            <person name="Mashreghi-Mohammadi M."/>
            <person name="Maslen G.L."/>
            <person name="Matthews L."/>
            <person name="McCann O.T."/>
            <person name="McLaren S.J."/>
            <person name="McLay K."/>
            <person name="McMurray A."/>
            <person name="Moore M.J.F."/>
            <person name="Mullikin J.C."/>
            <person name="Niblett D."/>
            <person name="Nickerson T."/>
            <person name="Novik K.L."/>
            <person name="Oliver K."/>
            <person name="Overton-Larty E.K."/>
            <person name="Parker A."/>
            <person name="Patel R."/>
            <person name="Pearce A.V."/>
            <person name="Peck A.I."/>
            <person name="Phillimore B.J.C.T."/>
            <person name="Phillips S."/>
            <person name="Plumb R.W."/>
            <person name="Porter K.M."/>
            <person name="Ramsey Y."/>
            <person name="Ranby S.A."/>
            <person name="Rice C.M."/>
            <person name="Ross M.T."/>
            <person name="Searle S.M."/>
            <person name="Sehra H.K."/>
            <person name="Sheridan E."/>
            <person name="Skuce C.D."/>
            <person name="Smith S."/>
            <person name="Smith M."/>
            <person name="Spraggon L."/>
            <person name="Squares S.L."/>
            <person name="Steward C.A."/>
            <person name="Sycamore N."/>
            <person name="Tamlyn-Hall G."/>
            <person name="Tester J."/>
            <person name="Theaker A.J."/>
            <person name="Thomas D.W."/>
            <person name="Thorpe A."/>
            <person name="Tracey A."/>
            <person name="Tromans A."/>
            <person name="Tubby B."/>
            <person name="Wall M."/>
            <person name="Wallis J.M."/>
            <person name="West A.P."/>
            <person name="White S.S."/>
            <person name="Whitehead S.L."/>
            <person name="Whittaker H."/>
            <person name="Wild A."/>
            <person name="Willey D.J."/>
            <person name="Wilmer T.E."/>
            <person name="Wood J.M."/>
            <person name="Wray P.W."/>
            <person name="Wyatt J.C."/>
            <person name="Young L."/>
            <person name="Younger R.M."/>
            <person name="Bentley D.R."/>
            <person name="Coulson A."/>
            <person name="Durbin R.M."/>
            <person name="Hubbard T."/>
            <person name="Sulston J.E."/>
            <person name="Dunham I."/>
            <person name="Rogers J."/>
            <person name="Beck S."/>
        </authorList>
    </citation>
    <scope>NUCLEOTIDE SEQUENCE [LARGE SCALE GENOMIC DNA]</scope>
</reference>
<reference key="4">
    <citation type="submission" date="2005-07" db="EMBL/GenBank/DDBJ databases">
        <authorList>
            <person name="Mural R.J."/>
            <person name="Istrail S."/>
            <person name="Sutton G.G."/>
            <person name="Florea L."/>
            <person name="Halpern A.L."/>
            <person name="Mobarry C.M."/>
            <person name="Lippert R."/>
            <person name="Walenz B."/>
            <person name="Shatkay H."/>
            <person name="Dew I."/>
            <person name="Miller J.R."/>
            <person name="Flanigan M.J."/>
            <person name="Edwards N.J."/>
            <person name="Bolanos R."/>
            <person name="Fasulo D."/>
            <person name="Halldorsson B.V."/>
            <person name="Hannenhalli S."/>
            <person name="Turner R."/>
            <person name="Yooseph S."/>
            <person name="Lu F."/>
            <person name="Nusskern D.R."/>
            <person name="Shue B.C."/>
            <person name="Zheng X.H."/>
            <person name="Zhong F."/>
            <person name="Delcher A.L."/>
            <person name="Huson D.H."/>
            <person name="Kravitz S.A."/>
            <person name="Mouchard L."/>
            <person name="Reinert K."/>
            <person name="Remington K.A."/>
            <person name="Clark A.G."/>
            <person name="Waterman M.S."/>
            <person name="Eichler E.E."/>
            <person name="Adams M.D."/>
            <person name="Hunkapiller M.W."/>
            <person name="Myers E.W."/>
            <person name="Venter J.C."/>
        </authorList>
    </citation>
    <scope>NUCLEOTIDE SEQUENCE [LARGE SCALE GENOMIC DNA]</scope>
</reference>
<reference key="5">
    <citation type="journal article" date="2004" name="Genome Res.">
        <title>The status, quality, and expansion of the NIH full-length cDNA project: the Mammalian Gene Collection (MGC).</title>
        <authorList>
            <consortium name="The MGC Project Team"/>
        </authorList>
    </citation>
    <scope>NUCLEOTIDE SEQUENCE [LARGE SCALE MRNA] (ISOFORMS 2 AND 4)</scope>
    <scope>VARIANT THR-372</scope>
</reference>
<reference key="6">
    <citation type="journal article" date="2012" name="Am. J. Physiol.">
        <title>A Na+-phosphate cotransporter homologue (SLC17A4 protein) is an intestinal organic anion exporter.</title>
        <authorList>
            <person name="Togawa N."/>
            <person name="Miyaji T."/>
            <person name="Izawa S."/>
            <person name="Omote H."/>
            <person name="Moriyama Y."/>
        </authorList>
    </citation>
    <scope>FUNCTION</scope>
    <scope>SUBCELLULAR LOCATION</scope>
    <scope>TISSUE SPECIFICITY</scope>
    <scope>TRANSPORTER ACTIVITY</scope>
    <scope>BIOPHYSICOCHEMICAL PROPERTIES</scope>
</reference>
<reference key="7">
    <citation type="journal article" date="2018" name="Nat. Commun.">
        <title>Genome-wide analyses identify a role for SLC17A4 and AADAT in thyroid hormone regulation.</title>
        <authorList>
            <consortium name="Lifelines Cohort Study"/>
            <person name="Teumer A."/>
            <person name="Chaker L."/>
            <person name="Groeneweg S."/>
            <person name="Li Y."/>
            <person name="Di Munno C."/>
            <person name="Barbieri C."/>
            <person name="Schultheiss U.T."/>
            <person name="Traglia M."/>
            <person name="Ahluwalia T.S."/>
            <person name="Akiyama M."/>
            <person name="Appel E.V.R."/>
            <person name="Arking D.E."/>
            <person name="Arnold A."/>
            <person name="Astrup A."/>
            <person name="Beekman M."/>
            <person name="Beilby J.P."/>
            <person name="Bekaert S."/>
            <person name="Boerwinkle E."/>
            <person name="Brown S.J."/>
            <person name="De Buyzere M."/>
            <person name="Campbell P.J."/>
            <person name="Ceresini G."/>
            <person name="Cerqueira C."/>
            <person name="Cucca F."/>
            <person name="Deary I.J."/>
            <person name="Deelen J."/>
            <person name="Eckardt K.U."/>
            <person name="Ekici A.B."/>
            <person name="Eriksson J.G."/>
            <person name="Ferrrucci L."/>
            <person name="Fiers T."/>
            <person name="Fiorillo E."/>
            <person name="Ford I."/>
            <person name="Fox C.S."/>
            <person name="Fuchsberger C."/>
            <person name="Galesloot T.E."/>
            <person name="Gieger C."/>
            <person name="Goegele M."/>
            <person name="De Grandi A."/>
            <person name="Grarup N."/>
            <person name="Greiser K.H."/>
            <person name="Haljas K."/>
            <person name="Hansen T."/>
            <person name="Harris S.E."/>
            <person name="van Heemst D."/>
            <person name="den Heijer M."/>
            <person name="Hicks A.A."/>
            <person name="den Hollander W."/>
            <person name="Homuth G."/>
            <person name="Hui J."/>
            <person name="Ikram M.A."/>
            <person name="Ittermann T."/>
            <person name="Jensen R.A."/>
            <person name="Jing J."/>
            <person name="Jukema J.W."/>
            <person name="Kajantie E."/>
            <person name="Kamatani Y."/>
            <person name="Kasbohm E."/>
            <person name="Kaufman J.M."/>
            <person name="Kiemeney L.A."/>
            <person name="Kloppenburg M."/>
            <person name="Kronenberg F."/>
            <person name="Kubo M."/>
            <person name="Lahti J."/>
            <person name="Lapauw B."/>
            <person name="Li S."/>
            <person name="Liewald D.C.M."/>
            <person name="Lim E.M."/>
            <person name="Linneberg A."/>
            <person name="Marina M."/>
            <person name="Mascalzoni D."/>
            <person name="Matsuda K."/>
            <person name="Medenwald D."/>
            <person name="Meisinger C."/>
            <person name="Meulenbelt I."/>
            <person name="De Meyer T."/>
            <person name="Meyer Zu Schwabedissen H.E."/>
            <person name="Mikolajczyk R."/>
            <person name="Moed M."/>
            <person name="Netea-Maier R.T."/>
            <person name="Nolte I.M."/>
            <person name="Okada Y."/>
            <person name="Pala M."/>
            <person name="Pattaro C."/>
            <person name="Pedersen O."/>
            <person name="Petersmann A."/>
            <person name="Porcu E."/>
            <person name="Postmus I."/>
            <person name="Pramstaller P.P."/>
            <person name="Psaty B.M."/>
            <person name="Ramos Y.F.M."/>
            <person name="Rawal R."/>
            <person name="Redmond P."/>
            <person name="Richards J.B."/>
            <person name="Rietzschel E.R."/>
            <person name="Rivadeneira F."/>
            <person name="Roef G."/>
            <person name="Rotter J.I."/>
            <person name="Sala C.F."/>
            <person name="Schlessinger D."/>
            <person name="Selvin E."/>
            <person name="Slagboom P.E."/>
            <person name="Soranzo N."/>
            <person name="Soerensen T.I.A."/>
            <person name="Spector T.D."/>
            <person name="Starr J.M."/>
            <person name="Stott D.J."/>
            <person name="Taes Y."/>
            <person name="Taliun D."/>
            <person name="Tanaka T."/>
            <person name="Thuesen B."/>
            <person name="Tiller D."/>
            <person name="Toniolo D."/>
            <person name="Uitterlinden A.G."/>
            <person name="Visser W.E."/>
            <person name="Walsh J.P."/>
            <person name="Wilson S.G."/>
            <person name="Wolffenbuttel B.H.R."/>
            <person name="Yang Q."/>
            <person name="Zheng H.F."/>
            <person name="Cappola A."/>
            <person name="Peeters R.P."/>
            <person name="Naitza S."/>
            <person name="Voelzke H."/>
            <person name="Sanna S."/>
            <person name="Koettgen A."/>
            <person name="Visser T.J."/>
            <person name="Medici M."/>
        </authorList>
    </citation>
    <scope>FUNCTION</scope>
    <scope>TRANSPORTER ACTIVITY</scope>
</reference>
<reference key="8">
    <citation type="journal article" date="2022" name="Thyroid">
        <title>Functional Characterization of the Novel and Specific Thyroid Hormone Transporter SLC17A4.</title>
        <authorList>
            <person name="Groeneweg S."/>
            <person name="van Geest F.S."/>
            <person name="Chen Z."/>
            <person name="Farina S."/>
            <person name="van Heerebeek R.E.A."/>
            <person name="Meima M.E."/>
            <person name="Peeters R.P."/>
            <person name="Heuer H."/>
            <person name="Medici M."/>
            <person name="Visser W.E."/>
        </authorList>
    </citation>
    <scope>FUNCTION</scope>
    <scope>TRANSPORTER ACTIVITY</scope>
    <scope>GLYCOSYLATION AT ASN-66; ASN-75 AND ASN-90</scope>
    <scope>MUTAGENESIS OF ASN-66; ASN-75 AND ASN-90</scope>
</reference>